<dbReference type="EC" id="3.2.1.1"/>
<dbReference type="EMBL" id="X52240">
    <property type="protein sequence ID" value="CAA36485.1"/>
    <property type="status" value="ALT_SEQ"/>
    <property type="molecule type" value="Genomic_DNA"/>
</dbReference>
<dbReference type="EMBL" id="CM000126">
    <property type="status" value="NOT_ANNOTATED_CDS"/>
    <property type="molecule type" value="Genomic_DNA"/>
</dbReference>
<dbReference type="PIR" id="S19142">
    <property type="entry name" value="ALRZOC"/>
</dbReference>
<dbReference type="SMR" id="A2WPU3"/>
<dbReference type="STRING" id="39946.A2WPU3"/>
<dbReference type="CAZy" id="GH13">
    <property type="family name" value="Glycoside Hydrolase Family 13"/>
</dbReference>
<dbReference type="Proteomes" id="UP000007015">
    <property type="component" value="Chromosome 1"/>
</dbReference>
<dbReference type="GO" id="GO:0004556">
    <property type="term" value="F:alpha-amylase activity"/>
    <property type="evidence" value="ECO:0007669"/>
    <property type="project" value="UniProtKB-EC"/>
</dbReference>
<dbReference type="GO" id="GO:0046872">
    <property type="term" value="F:metal ion binding"/>
    <property type="evidence" value="ECO:0007669"/>
    <property type="project" value="UniProtKB-KW"/>
</dbReference>
<dbReference type="Gene3D" id="3.20.20.80">
    <property type="entry name" value="Glycosidases"/>
    <property type="match status" value="2"/>
</dbReference>
<dbReference type="InterPro" id="IPR017853">
    <property type="entry name" value="Glycoside_hydrolase_SF"/>
</dbReference>
<dbReference type="PANTHER" id="PTHR43447">
    <property type="entry name" value="ALPHA-AMYLASE"/>
    <property type="match status" value="1"/>
</dbReference>
<dbReference type="SUPFAM" id="SSF51445">
    <property type="entry name" value="(Trans)glycosidases"/>
    <property type="match status" value="1"/>
</dbReference>
<organism>
    <name type="scientific">Oryza sativa subsp. indica</name>
    <name type="common">Rice</name>
    <dbReference type="NCBI Taxonomy" id="39946"/>
    <lineage>
        <taxon>Eukaryota</taxon>
        <taxon>Viridiplantae</taxon>
        <taxon>Streptophyta</taxon>
        <taxon>Embryophyta</taxon>
        <taxon>Tracheophyta</taxon>
        <taxon>Spermatophyta</taxon>
        <taxon>Magnoliopsida</taxon>
        <taxon>Liliopsida</taxon>
        <taxon>Poales</taxon>
        <taxon>Poaceae</taxon>
        <taxon>BOP clade</taxon>
        <taxon>Oryzoideae</taxon>
        <taxon>Oryzeae</taxon>
        <taxon>Oryzinae</taxon>
        <taxon>Oryza</taxon>
        <taxon>Oryza sativa</taxon>
    </lineage>
</organism>
<protein>
    <recommendedName>
        <fullName>Alpha-amylase isozyme C</fullName>
        <ecNumber>3.2.1.1</ecNumber>
    </recommendedName>
    <alternativeName>
        <fullName>1,4-alpha-D-glucan glucanohydrolase</fullName>
    </alternativeName>
    <alternativeName>
        <fullName>Alpha-amylase isozyme 1B</fullName>
    </alternativeName>
</protein>
<sequence length="348" mass="38508">MQVPIEHNGGEQTLLVPFRAHRPPRPLLQLGSRASPVSGFQLGVVEGEWRVVQPAYGQARWTTSPPPASPTSGSLRRPTLSASKATCWGGCTIWTRPIIEAFHGKGVQVIADIVINHRTAEHKDSRGIYCRLPPRLGPAHDLPRRPLRRRHRKPGHRRRTSTTSTSASSGSSSAGSTGSRWTSASTRGASTSPRATPPTWQRSTSMPPSRASPWPRYGRRWRTAGTASRTTTRTRTGRSWSTGSIVSAAPTAMPRRSTSPPRASSTSPWRAIELWRLRGEDGKAPGMIGWWPAKATTFVDNHDTGNPCIFYDHFFDWGLKDEIERLVSIRNRQGIHPAWGRCCWLLPS</sequence>
<comment type="function">
    <text>Important for breakdown of endosperm starch during germination.</text>
</comment>
<comment type="catalytic activity">
    <reaction>
        <text>Endohydrolysis of (1-&gt;4)-alpha-D-glucosidic linkages in polysaccharides containing three or more (1-&gt;4)-alpha-linked D-glucose units.</text>
        <dbReference type="EC" id="3.2.1.1"/>
    </reaction>
</comment>
<comment type="cofactor">
    <cofactor evidence="1">
        <name>Ca(2+)</name>
        <dbReference type="ChEBI" id="CHEBI:29108"/>
    </cofactor>
    <text evidence="1">Binds 3 Ca(2+) ions per subunit.</text>
</comment>
<comment type="subunit">
    <text evidence="1">Monomer.</text>
</comment>
<comment type="similarity">
    <text evidence="3">Belongs to the glycosyl hydrolase 13 family.</text>
</comment>
<comment type="sequence caution" evidence="3">
    <conflict type="frameshift">
        <sequence resource="EMBL-CDS" id="CAA36485"/>
    </conflict>
</comment>
<comment type="sequence caution" evidence="3">
    <conflict type="miscellaneous discrepancy">
        <sequence resource="EMBL-CDS" id="CAA36485"/>
    </conflict>
    <text>Sequencing errors.</text>
</comment>
<evidence type="ECO:0000250" key="1"/>
<evidence type="ECO:0000256" key="2">
    <source>
        <dbReference type="SAM" id="MobiDB-lite"/>
    </source>
</evidence>
<evidence type="ECO:0000305" key="3"/>
<proteinExistence type="inferred from homology"/>
<keyword id="KW-0106">Calcium</keyword>
<keyword id="KW-0119">Carbohydrate metabolism</keyword>
<keyword id="KW-0326">Glycosidase</keyword>
<keyword id="KW-0378">Hydrolase</keyword>
<keyword id="KW-0479">Metal-binding</keyword>
<keyword id="KW-1185">Reference proteome</keyword>
<feature type="chain" id="PRO_0000291431" description="Alpha-amylase isozyme C">
    <location>
        <begin position="1"/>
        <end position="348"/>
    </location>
</feature>
<feature type="region of interest" description="Disordered" evidence="2">
    <location>
        <begin position="126"/>
        <end position="266"/>
    </location>
</feature>
<feature type="compositionally biased region" description="Basic residues" evidence="2">
    <location>
        <begin position="145"/>
        <end position="160"/>
    </location>
</feature>
<feature type="compositionally biased region" description="Low complexity" evidence="2">
    <location>
        <begin position="161"/>
        <end position="188"/>
    </location>
</feature>
<feature type="compositionally biased region" description="Polar residues" evidence="2">
    <location>
        <begin position="189"/>
        <end position="207"/>
    </location>
</feature>
<feature type="compositionally biased region" description="Low complexity" evidence="2">
    <location>
        <begin position="223"/>
        <end position="266"/>
    </location>
</feature>
<feature type="binding site" evidence="1">
    <location>
        <begin position="87"/>
        <end position="88"/>
    </location>
    <ligand>
        <name>substrate</name>
    </ligand>
</feature>
<feature type="binding site" evidence="1">
    <location>
        <position position="116"/>
    </location>
    <ligand>
        <name>Ca(2+)</name>
        <dbReference type="ChEBI" id="CHEBI:29108"/>
    </ligand>
</feature>
<feature type="binding site" evidence="1">
    <location>
        <begin position="182"/>
        <end position="187"/>
    </location>
    <ligand>
        <name>substrate</name>
    </ligand>
</feature>
<feature type="binding site" evidence="1">
    <location>
        <position position="188"/>
    </location>
    <ligand>
        <name>Ca(2+)</name>
        <dbReference type="ChEBI" id="CHEBI:29108"/>
    </ligand>
</feature>
<feature type="binding site" evidence="1">
    <location>
        <position position="214"/>
    </location>
    <ligand>
        <name>substrate</name>
    </ligand>
</feature>
<feature type="binding site" evidence="1">
    <location>
        <position position="283"/>
    </location>
    <ligand>
        <name>substrate</name>
    </ligand>
</feature>
<feature type="binding site" evidence="1">
    <location>
        <begin position="289"/>
        <end position="291"/>
    </location>
    <ligand>
        <name>substrate</name>
    </ligand>
</feature>
<feature type="binding site" evidence="1">
    <location>
        <position position="302"/>
    </location>
    <ligand>
        <name>substrate</name>
    </ligand>
</feature>
<feature type="binding site" evidence="1">
    <location>
        <position position="344"/>
    </location>
    <ligand>
        <name>substrate</name>
    </ligand>
</feature>
<feature type="site" description="Transition state stabilizer" evidence="1">
    <location>
        <position position="303"/>
    </location>
</feature>
<name>AMYC1_ORYSI</name>
<gene>
    <name type="primary">AMYC</name>
    <name type="synonym">AMY1B</name>
    <name type="ORF">OsI_001836</name>
</gene>
<reference key="1">
    <citation type="journal article" date="1992" name="Plant Mol. Biol.">
        <title>Nucleotide sequence of a high-pI rice (Oryza sativa) -amylase gene.</title>
        <authorList>
            <person name="Kim J.-K."/>
            <person name="Wu R."/>
        </authorList>
    </citation>
    <scope>NUCLEOTIDE SEQUENCE [GENOMIC DNA]</scope>
    <source>
        <strain>cv. IR26</strain>
        <tissue>Leaf</tissue>
    </source>
</reference>
<reference key="2">
    <citation type="journal article" date="2005" name="PLoS Biol.">
        <title>The genomes of Oryza sativa: a history of duplications.</title>
        <authorList>
            <person name="Yu J."/>
            <person name="Wang J."/>
            <person name="Lin W."/>
            <person name="Li S."/>
            <person name="Li H."/>
            <person name="Zhou J."/>
            <person name="Ni P."/>
            <person name="Dong W."/>
            <person name="Hu S."/>
            <person name="Zeng C."/>
            <person name="Zhang J."/>
            <person name="Zhang Y."/>
            <person name="Li R."/>
            <person name="Xu Z."/>
            <person name="Li S."/>
            <person name="Li X."/>
            <person name="Zheng H."/>
            <person name="Cong L."/>
            <person name="Lin L."/>
            <person name="Yin J."/>
            <person name="Geng J."/>
            <person name="Li G."/>
            <person name="Shi J."/>
            <person name="Liu J."/>
            <person name="Lv H."/>
            <person name="Li J."/>
            <person name="Wang J."/>
            <person name="Deng Y."/>
            <person name="Ran L."/>
            <person name="Shi X."/>
            <person name="Wang X."/>
            <person name="Wu Q."/>
            <person name="Li C."/>
            <person name="Ren X."/>
            <person name="Wang J."/>
            <person name="Wang X."/>
            <person name="Li D."/>
            <person name="Liu D."/>
            <person name="Zhang X."/>
            <person name="Ji Z."/>
            <person name="Zhao W."/>
            <person name="Sun Y."/>
            <person name="Zhang Z."/>
            <person name="Bao J."/>
            <person name="Han Y."/>
            <person name="Dong L."/>
            <person name="Ji J."/>
            <person name="Chen P."/>
            <person name="Wu S."/>
            <person name="Liu J."/>
            <person name="Xiao Y."/>
            <person name="Bu D."/>
            <person name="Tan J."/>
            <person name="Yang L."/>
            <person name="Ye C."/>
            <person name="Zhang J."/>
            <person name="Xu J."/>
            <person name="Zhou Y."/>
            <person name="Yu Y."/>
            <person name="Zhang B."/>
            <person name="Zhuang S."/>
            <person name="Wei H."/>
            <person name="Liu B."/>
            <person name="Lei M."/>
            <person name="Yu H."/>
            <person name="Li Y."/>
            <person name="Xu H."/>
            <person name="Wei S."/>
            <person name="He X."/>
            <person name="Fang L."/>
            <person name="Zhang Z."/>
            <person name="Zhang Y."/>
            <person name="Huang X."/>
            <person name="Su Z."/>
            <person name="Tong W."/>
            <person name="Li J."/>
            <person name="Tong Z."/>
            <person name="Li S."/>
            <person name="Ye J."/>
            <person name="Wang L."/>
            <person name="Fang L."/>
            <person name="Lei T."/>
            <person name="Chen C.-S."/>
            <person name="Chen H.-C."/>
            <person name="Xu Z."/>
            <person name="Li H."/>
            <person name="Huang H."/>
            <person name="Zhang F."/>
            <person name="Xu H."/>
            <person name="Li N."/>
            <person name="Zhao C."/>
            <person name="Li S."/>
            <person name="Dong L."/>
            <person name="Huang Y."/>
            <person name="Li L."/>
            <person name="Xi Y."/>
            <person name="Qi Q."/>
            <person name="Li W."/>
            <person name="Zhang B."/>
            <person name="Hu W."/>
            <person name="Zhang Y."/>
            <person name="Tian X."/>
            <person name="Jiao Y."/>
            <person name="Liang X."/>
            <person name="Jin J."/>
            <person name="Gao L."/>
            <person name="Zheng W."/>
            <person name="Hao B."/>
            <person name="Liu S.-M."/>
            <person name="Wang W."/>
            <person name="Yuan L."/>
            <person name="Cao M."/>
            <person name="McDermott J."/>
            <person name="Samudrala R."/>
            <person name="Wang J."/>
            <person name="Wong G.K.-S."/>
            <person name="Yang H."/>
        </authorList>
    </citation>
    <scope>NUCLEOTIDE SEQUENCE [LARGE SCALE GENOMIC DNA]</scope>
    <source>
        <strain>cv. 93-11</strain>
    </source>
</reference>
<accession>A2WPU3</accession>
<accession>P27940</accession>
<accession>Q5ZBK1</accession>